<reference key="1">
    <citation type="journal article" date="1999" name="DNA Res.">
        <title>Complete genome sequence of an aerobic hyper-thermophilic crenarchaeon, Aeropyrum pernix K1.</title>
        <authorList>
            <person name="Kawarabayasi Y."/>
            <person name="Hino Y."/>
            <person name="Horikawa H."/>
            <person name="Yamazaki S."/>
            <person name="Haikawa Y."/>
            <person name="Jin-no K."/>
            <person name="Takahashi M."/>
            <person name="Sekine M."/>
            <person name="Baba S."/>
            <person name="Ankai A."/>
            <person name="Kosugi H."/>
            <person name="Hosoyama A."/>
            <person name="Fukui S."/>
            <person name="Nagai Y."/>
            <person name="Nishijima K."/>
            <person name="Nakazawa H."/>
            <person name="Takamiya M."/>
            <person name="Masuda S."/>
            <person name="Funahashi T."/>
            <person name="Tanaka T."/>
            <person name="Kudoh Y."/>
            <person name="Yamazaki J."/>
            <person name="Kushida N."/>
            <person name="Oguchi A."/>
            <person name="Aoki K."/>
            <person name="Kubota K."/>
            <person name="Nakamura Y."/>
            <person name="Nomura N."/>
            <person name="Sako Y."/>
            <person name="Kikuchi H."/>
        </authorList>
    </citation>
    <scope>NUCLEOTIDE SEQUENCE [LARGE SCALE GENOMIC DNA]</scope>
    <source>
        <strain>ATCC 700893 / DSM 11879 / JCM 9820 / NBRC 100138 / K1</strain>
    </source>
</reference>
<organism>
    <name type="scientific">Aeropyrum pernix (strain ATCC 700893 / DSM 11879 / JCM 9820 / NBRC 100138 / K1)</name>
    <dbReference type="NCBI Taxonomy" id="272557"/>
    <lineage>
        <taxon>Archaea</taxon>
        <taxon>Thermoproteota</taxon>
        <taxon>Thermoprotei</taxon>
        <taxon>Desulfurococcales</taxon>
        <taxon>Desulfurococcaceae</taxon>
        <taxon>Aeropyrum</taxon>
    </lineage>
</organism>
<dbReference type="EC" id="4.2.1.11" evidence="1"/>
<dbReference type="EMBL" id="BA000002">
    <property type="protein sequence ID" value="BAA81473.1"/>
    <property type="molecule type" value="Genomic_DNA"/>
</dbReference>
<dbReference type="PIR" id="A72477">
    <property type="entry name" value="A72477"/>
</dbReference>
<dbReference type="RefSeq" id="WP_010867019.1">
    <property type="nucleotide sequence ID" value="NC_000854.2"/>
</dbReference>
<dbReference type="SMR" id="Q9Y927"/>
<dbReference type="STRING" id="272557.APE_2458"/>
<dbReference type="EnsemblBacteria" id="BAA81473">
    <property type="protein sequence ID" value="BAA81473"/>
    <property type="gene ID" value="APE_2458"/>
</dbReference>
<dbReference type="GeneID" id="1445431"/>
<dbReference type="KEGG" id="ape:APE_2458"/>
<dbReference type="PATRIC" id="fig|272557.25.peg.1632"/>
<dbReference type="eggNOG" id="arCOG01169">
    <property type="taxonomic scope" value="Archaea"/>
</dbReference>
<dbReference type="UniPathway" id="UPA00109">
    <property type="reaction ID" value="UER00187"/>
</dbReference>
<dbReference type="Proteomes" id="UP000002518">
    <property type="component" value="Chromosome"/>
</dbReference>
<dbReference type="GO" id="GO:0009986">
    <property type="term" value="C:cell surface"/>
    <property type="evidence" value="ECO:0007669"/>
    <property type="project" value="UniProtKB-SubCell"/>
</dbReference>
<dbReference type="GO" id="GO:0005576">
    <property type="term" value="C:extracellular region"/>
    <property type="evidence" value="ECO:0007669"/>
    <property type="project" value="UniProtKB-SubCell"/>
</dbReference>
<dbReference type="GO" id="GO:0000015">
    <property type="term" value="C:phosphopyruvate hydratase complex"/>
    <property type="evidence" value="ECO:0007669"/>
    <property type="project" value="InterPro"/>
</dbReference>
<dbReference type="GO" id="GO:0000287">
    <property type="term" value="F:magnesium ion binding"/>
    <property type="evidence" value="ECO:0007669"/>
    <property type="project" value="UniProtKB-UniRule"/>
</dbReference>
<dbReference type="GO" id="GO:0004634">
    <property type="term" value="F:phosphopyruvate hydratase activity"/>
    <property type="evidence" value="ECO:0007669"/>
    <property type="project" value="UniProtKB-UniRule"/>
</dbReference>
<dbReference type="GO" id="GO:0006096">
    <property type="term" value="P:glycolytic process"/>
    <property type="evidence" value="ECO:0007669"/>
    <property type="project" value="UniProtKB-UniRule"/>
</dbReference>
<dbReference type="CDD" id="cd03313">
    <property type="entry name" value="enolase"/>
    <property type="match status" value="1"/>
</dbReference>
<dbReference type="Gene3D" id="3.20.20.120">
    <property type="entry name" value="Enolase-like C-terminal domain"/>
    <property type="match status" value="1"/>
</dbReference>
<dbReference type="Gene3D" id="3.30.390.10">
    <property type="entry name" value="Enolase-like, N-terminal domain"/>
    <property type="match status" value="1"/>
</dbReference>
<dbReference type="HAMAP" id="MF_00318">
    <property type="entry name" value="Enolase"/>
    <property type="match status" value="1"/>
</dbReference>
<dbReference type="InterPro" id="IPR000941">
    <property type="entry name" value="Enolase"/>
</dbReference>
<dbReference type="InterPro" id="IPR036849">
    <property type="entry name" value="Enolase-like_C_sf"/>
</dbReference>
<dbReference type="InterPro" id="IPR029017">
    <property type="entry name" value="Enolase-like_N"/>
</dbReference>
<dbReference type="InterPro" id="IPR020810">
    <property type="entry name" value="Enolase_C"/>
</dbReference>
<dbReference type="InterPro" id="IPR020809">
    <property type="entry name" value="Enolase_CS"/>
</dbReference>
<dbReference type="InterPro" id="IPR020811">
    <property type="entry name" value="Enolase_N"/>
</dbReference>
<dbReference type="NCBIfam" id="TIGR01060">
    <property type="entry name" value="eno"/>
    <property type="match status" value="1"/>
</dbReference>
<dbReference type="PANTHER" id="PTHR11902">
    <property type="entry name" value="ENOLASE"/>
    <property type="match status" value="1"/>
</dbReference>
<dbReference type="PANTHER" id="PTHR11902:SF1">
    <property type="entry name" value="ENOLASE"/>
    <property type="match status" value="1"/>
</dbReference>
<dbReference type="Pfam" id="PF00113">
    <property type="entry name" value="Enolase_C"/>
    <property type="match status" value="1"/>
</dbReference>
<dbReference type="Pfam" id="PF03952">
    <property type="entry name" value="Enolase_N"/>
    <property type="match status" value="1"/>
</dbReference>
<dbReference type="PIRSF" id="PIRSF001400">
    <property type="entry name" value="Enolase"/>
    <property type="match status" value="1"/>
</dbReference>
<dbReference type="PRINTS" id="PR00148">
    <property type="entry name" value="ENOLASE"/>
</dbReference>
<dbReference type="SFLD" id="SFLDS00001">
    <property type="entry name" value="Enolase"/>
    <property type="match status" value="1"/>
</dbReference>
<dbReference type="SFLD" id="SFLDF00002">
    <property type="entry name" value="enolase"/>
    <property type="match status" value="1"/>
</dbReference>
<dbReference type="SMART" id="SM01192">
    <property type="entry name" value="Enolase_C"/>
    <property type="match status" value="1"/>
</dbReference>
<dbReference type="SMART" id="SM01193">
    <property type="entry name" value="Enolase_N"/>
    <property type="match status" value="1"/>
</dbReference>
<dbReference type="SUPFAM" id="SSF51604">
    <property type="entry name" value="Enolase C-terminal domain-like"/>
    <property type="match status" value="1"/>
</dbReference>
<dbReference type="SUPFAM" id="SSF54826">
    <property type="entry name" value="Enolase N-terminal domain-like"/>
    <property type="match status" value="1"/>
</dbReference>
<dbReference type="PROSITE" id="PS00164">
    <property type="entry name" value="ENOLASE"/>
    <property type="match status" value="1"/>
</dbReference>
<name>ENO_AERPE</name>
<comment type="function">
    <text evidence="1">Catalyzes the reversible conversion of 2-phosphoglycerate (2-PG) into phosphoenolpyruvate (PEP). It is essential for the degradation of carbohydrates via glycolysis.</text>
</comment>
<comment type="catalytic activity">
    <reaction evidence="1">
        <text>(2R)-2-phosphoglycerate = phosphoenolpyruvate + H2O</text>
        <dbReference type="Rhea" id="RHEA:10164"/>
        <dbReference type="ChEBI" id="CHEBI:15377"/>
        <dbReference type="ChEBI" id="CHEBI:58289"/>
        <dbReference type="ChEBI" id="CHEBI:58702"/>
        <dbReference type="EC" id="4.2.1.11"/>
    </reaction>
</comment>
<comment type="cofactor">
    <cofactor evidence="1">
        <name>Mg(2+)</name>
        <dbReference type="ChEBI" id="CHEBI:18420"/>
    </cofactor>
    <text evidence="1">Binds a second Mg(2+) ion via substrate during catalysis.</text>
</comment>
<comment type="pathway">
    <text evidence="1">Carbohydrate degradation; glycolysis; pyruvate from D-glyceraldehyde 3-phosphate: step 4/5.</text>
</comment>
<comment type="subcellular location">
    <subcellularLocation>
        <location evidence="1">Cytoplasm</location>
    </subcellularLocation>
    <subcellularLocation>
        <location evidence="1">Secreted</location>
    </subcellularLocation>
    <subcellularLocation>
        <location evidence="1">Cell surface</location>
    </subcellularLocation>
    <text evidence="1">Fractions of enolase are present in both the cytoplasm and on the cell surface.</text>
</comment>
<comment type="similarity">
    <text evidence="1">Belongs to the enolase family.</text>
</comment>
<gene>
    <name evidence="1" type="primary">eno</name>
    <name type="ordered locus">APE_2458</name>
</gene>
<evidence type="ECO:0000255" key="1">
    <source>
        <dbReference type="HAMAP-Rule" id="MF_00318"/>
    </source>
</evidence>
<protein>
    <recommendedName>
        <fullName evidence="1">Enolase</fullName>
        <ecNumber evidence="1">4.2.1.11</ecNumber>
    </recommendedName>
    <alternativeName>
        <fullName evidence="1">2-phospho-D-glycerate hydro-lyase</fullName>
    </alternativeName>
    <alternativeName>
        <fullName evidence="1">2-phosphoglycerate dehydratase</fullName>
    </alternativeName>
</protein>
<accession>Q9Y927</accession>
<feature type="chain" id="PRO_0000134019" description="Enolase">
    <location>
        <begin position="1"/>
        <end position="432"/>
    </location>
</feature>
<feature type="active site" description="Proton donor" evidence="1">
    <location>
        <position position="210"/>
    </location>
</feature>
<feature type="active site" description="Proton acceptor" evidence="1">
    <location>
        <position position="340"/>
    </location>
</feature>
<feature type="binding site" evidence="1">
    <location>
        <position position="166"/>
    </location>
    <ligand>
        <name>(2R)-2-phosphoglycerate</name>
        <dbReference type="ChEBI" id="CHEBI:58289"/>
    </ligand>
</feature>
<feature type="binding site" evidence="1">
    <location>
        <position position="247"/>
    </location>
    <ligand>
        <name>Mg(2+)</name>
        <dbReference type="ChEBI" id="CHEBI:18420"/>
    </ligand>
</feature>
<feature type="binding site" evidence="1">
    <location>
        <position position="288"/>
    </location>
    <ligand>
        <name>Mg(2+)</name>
        <dbReference type="ChEBI" id="CHEBI:18420"/>
    </ligand>
</feature>
<feature type="binding site" evidence="1">
    <location>
        <position position="315"/>
    </location>
    <ligand>
        <name>Mg(2+)</name>
        <dbReference type="ChEBI" id="CHEBI:18420"/>
    </ligand>
</feature>
<feature type="binding site" evidence="1">
    <location>
        <position position="340"/>
    </location>
    <ligand>
        <name>(2R)-2-phosphoglycerate</name>
        <dbReference type="ChEBI" id="CHEBI:58289"/>
    </ligand>
</feature>
<feature type="binding site" evidence="1">
    <location>
        <position position="369"/>
    </location>
    <ligand>
        <name>(2R)-2-phosphoglycerate</name>
        <dbReference type="ChEBI" id="CHEBI:58289"/>
    </ligand>
</feature>
<feature type="binding site" evidence="1">
    <location>
        <position position="370"/>
    </location>
    <ligand>
        <name>(2R)-2-phosphoglycerate</name>
        <dbReference type="ChEBI" id="CHEBI:58289"/>
    </ligand>
</feature>
<feature type="binding site" evidence="1">
    <location>
        <position position="391"/>
    </location>
    <ligand>
        <name>(2R)-2-phosphoglycerate</name>
        <dbReference type="ChEBI" id="CHEBI:58289"/>
    </ligand>
</feature>
<keyword id="KW-0963">Cytoplasm</keyword>
<keyword id="KW-0324">Glycolysis</keyword>
<keyword id="KW-0456">Lyase</keyword>
<keyword id="KW-0460">Magnesium</keyword>
<keyword id="KW-0479">Metal-binding</keyword>
<keyword id="KW-1185">Reference proteome</keyword>
<keyword id="KW-0964">Secreted</keyword>
<proteinExistence type="inferred from homology"/>
<sequence>MGVNDFAIERVWGLQVLDSRGNPTVKAYVKLAGGSLGWGIAPSGASRGEREAVELRDGGGKWRGKGVSRAVSLLNTVVAPRLEGVDARRQAQIDRLLIELDGTPNKSRLGGNTTTALSIAVSRAAAAQARLELFQYLGGAGARRLPIPLLNVINGGVHAGNELDFQEFMIIPYGFESFTEAMRAAVETYGELKSLLKDRYGASAVNVGDEGGFAPPMRSAEEALKTLVDAVEKAGYQPGSEIALGIDAAASQLYSNGRYSVEGKSLSREELLSLYQRLVEQYPIVYLEDPFSEDDYEGFKAAVDALSTETIIVGDDLLVTNPQRVKEASALKAVTGLLVKVNQVGTLTEALEAIQAARDRGIVHIVSHRSGDTEDTFIADLAVATEALMIKTGAPARGERTSKYNRLLEIENILGYSAEYAGPELRGVMGRR</sequence>